<keyword id="KW-0238">DNA-binding</keyword>
<keyword id="KW-0539">Nucleus</keyword>
<keyword id="KW-1185">Reference proteome</keyword>
<reference key="1">
    <citation type="journal article" date="2004" name="Genomics">
        <title>Diverse fates of paralogs following segmental duplication of telomeric genes.</title>
        <authorList>
            <person name="Wong A."/>
            <person name="Vallender E.J."/>
            <person name="Heretis K."/>
            <person name="Ilkin Y."/>
            <person name="Lahn B.T."/>
            <person name="Lese Martin C."/>
            <person name="Ledbetter D.H."/>
        </authorList>
    </citation>
    <scope>NUCLEOTIDE SEQUENCE [MRNA]</scope>
</reference>
<reference key="2">
    <citation type="journal article" date="2004" name="Nature">
        <title>DNA sequence and analysis of human chromosome 9.</title>
        <authorList>
            <person name="Humphray S.J."/>
            <person name="Oliver K."/>
            <person name="Hunt A.R."/>
            <person name="Plumb R.W."/>
            <person name="Loveland J.E."/>
            <person name="Howe K.L."/>
            <person name="Andrews T.D."/>
            <person name="Searle S."/>
            <person name="Hunt S.E."/>
            <person name="Scott C.E."/>
            <person name="Jones M.C."/>
            <person name="Ainscough R."/>
            <person name="Almeida J.P."/>
            <person name="Ambrose K.D."/>
            <person name="Ashwell R.I.S."/>
            <person name="Babbage A.K."/>
            <person name="Babbage S."/>
            <person name="Bagguley C.L."/>
            <person name="Bailey J."/>
            <person name="Banerjee R."/>
            <person name="Barker D.J."/>
            <person name="Barlow K.F."/>
            <person name="Bates K."/>
            <person name="Beasley H."/>
            <person name="Beasley O."/>
            <person name="Bird C.P."/>
            <person name="Bray-Allen S."/>
            <person name="Brown A.J."/>
            <person name="Brown J.Y."/>
            <person name="Burford D."/>
            <person name="Burrill W."/>
            <person name="Burton J."/>
            <person name="Carder C."/>
            <person name="Carter N.P."/>
            <person name="Chapman J.C."/>
            <person name="Chen Y."/>
            <person name="Clarke G."/>
            <person name="Clark S.Y."/>
            <person name="Clee C.M."/>
            <person name="Clegg S."/>
            <person name="Collier R.E."/>
            <person name="Corby N."/>
            <person name="Crosier M."/>
            <person name="Cummings A.T."/>
            <person name="Davies J."/>
            <person name="Dhami P."/>
            <person name="Dunn M."/>
            <person name="Dutta I."/>
            <person name="Dyer L.W."/>
            <person name="Earthrowl M.E."/>
            <person name="Faulkner L."/>
            <person name="Fleming C.J."/>
            <person name="Frankish A."/>
            <person name="Frankland J.A."/>
            <person name="French L."/>
            <person name="Fricker D.G."/>
            <person name="Garner P."/>
            <person name="Garnett J."/>
            <person name="Ghori J."/>
            <person name="Gilbert J.G.R."/>
            <person name="Glison C."/>
            <person name="Grafham D.V."/>
            <person name="Gribble S."/>
            <person name="Griffiths C."/>
            <person name="Griffiths-Jones S."/>
            <person name="Grocock R."/>
            <person name="Guy J."/>
            <person name="Hall R.E."/>
            <person name="Hammond S."/>
            <person name="Harley J.L."/>
            <person name="Harrison E.S.I."/>
            <person name="Hart E.A."/>
            <person name="Heath P.D."/>
            <person name="Henderson C.D."/>
            <person name="Hopkins B.L."/>
            <person name="Howard P.J."/>
            <person name="Howden P.J."/>
            <person name="Huckle E."/>
            <person name="Johnson C."/>
            <person name="Johnson D."/>
            <person name="Joy A.A."/>
            <person name="Kay M."/>
            <person name="Keenan S."/>
            <person name="Kershaw J.K."/>
            <person name="Kimberley A.M."/>
            <person name="King A."/>
            <person name="Knights A."/>
            <person name="Laird G.K."/>
            <person name="Langford C."/>
            <person name="Lawlor S."/>
            <person name="Leongamornlert D.A."/>
            <person name="Leversha M."/>
            <person name="Lloyd C."/>
            <person name="Lloyd D.M."/>
            <person name="Lovell J."/>
            <person name="Martin S."/>
            <person name="Mashreghi-Mohammadi M."/>
            <person name="Matthews L."/>
            <person name="McLaren S."/>
            <person name="McLay K.E."/>
            <person name="McMurray A."/>
            <person name="Milne S."/>
            <person name="Nickerson T."/>
            <person name="Nisbett J."/>
            <person name="Nordsiek G."/>
            <person name="Pearce A.V."/>
            <person name="Peck A.I."/>
            <person name="Porter K.M."/>
            <person name="Pandian R."/>
            <person name="Pelan S."/>
            <person name="Phillimore B."/>
            <person name="Povey S."/>
            <person name="Ramsey Y."/>
            <person name="Rand V."/>
            <person name="Scharfe M."/>
            <person name="Sehra H.K."/>
            <person name="Shownkeen R."/>
            <person name="Sims S.K."/>
            <person name="Skuce C.D."/>
            <person name="Smith M."/>
            <person name="Steward C.A."/>
            <person name="Swarbreck D."/>
            <person name="Sycamore N."/>
            <person name="Tester J."/>
            <person name="Thorpe A."/>
            <person name="Tracey A."/>
            <person name="Tromans A."/>
            <person name="Thomas D.W."/>
            <person name="Wall M."/>
            <person name="Wallis J.M."/>
            <person name="West A.P."/>
            <person name="Whitehead S.L."/>
            <person name="Willey D.L."/>
            <person name="Williams S.A."/>
            <person name="Wilming L."/>
            <person name="Wray P.W."/>
            <person name="Young L."/>
            <person name="Ashurst J.L."/>
            <person name="Coulson A."/>
            <person name="Blocker H."/>
            <person name="Durbin R.M."/>
            <person name="Sulston J.E."/>
            <person name="Hubbard T."/>
            <person name="Jackson M.J."/>
            <person name="Bentley D.R."/>
            <person name="Beck S."/>
            <person name="Rogers J."/>
            <person name="Dunham I."/>
        </authorList>
    </citation>
    <scope>NUCLEOTIDE SEQUENCE [LARGE SCALE GENOMIC DNA]</scope>
</reference>
<proteinExistence type="evidence at protein level"/>
<dbReference type="EMBL" id="AY344642">
    <property type="protein sequence ID" value="AAQ76880.1"/>
    <property type="molecule type" value="mRNA"/>
</dbReference>
<dbReference type="EMBL" id="AL353608">
    <property type="status" value="NOT_ANNOTATED_CDS"/>
    <property type="molecule type" value="Genomic_DNA"/>
</dbReference>
<dbReference type="CCDS" id="CCDS43833.1"/>
<dbReference type="RefSeq" id="NP_954586.4">
    <property type="nucleotide sequence ID" value="NM_199135.4"/>
</dbReference>
<dbReference type="SMR" id="Q6VB84"/>
<dbReference type="BioGRID" id="130365">
    <property type="interactions" value="17"/>
</dbReference>
<dbReference type="FunCoup" id="Q6VB84">
    <property type="interactions" value="8"/>
</dbReference>
<dbReference type="IntAct" id="Q6VB84">
    <property type="interactions" value="16"/>
</dbReference>
<dbReference type="STRING" id="9606.ENSP00000341961"/>
<dbReference type="GlyGen" id="Q6VB84">
    <property type="glycosylation" value="1 site"/>
</dbReference>
<dbReference type="BioMuta" id="FOXD4L3"/>
<dbReference type="DMDM" id="317373356"/>
<dbReference type="jPOST" id="Q6VB84"/>
<dbReference type="MassIVE" id="Q6VB84"/>
<dbReference type="PaxDb" id="9606-ENSP00000341961"/>
<dbReference type="PeptideAtlas" id="Q6VB84"/>
<dbReference type="Antibodypedia" id="43289">
    <property type="antibodies" value="11 antibodies from 5 providers"/>
</dbReference>
<dbReference type="DNASU" id="286380"/>
<dbReference type="Ensembl" id="ENST00000342833.4">
    <property type="protein sequence ID" value="ENSP00000341961.2"/>
    <property type="gene ID" value="ENSG00000187559.6"/>
</dbReference>
<dbReference type="GeneID" id="286380"/>
<dbReference type="KEGG" id="hsa:286380"/>
<dbReference type="MANE-Select" id="ENST00000342833.4">
    <property type="protein sequence ID" value="ENSP00000341961.2"/>
    <property type="RefSeq nucleotide sequence ID" value="NM_199135.4"/>
    <property type="RefSeq protein sequence ID" value="NP_954586.4"/>
</dbReference>
<dbReference type="UCSC" id="uc004agm.2">
    <property type="organism name" value="human"/>
</dbReference>
<dbReference type="AGR" id="HGNC:18523"/>
<dbReference type="CTD" id="286380"/>
<dbReference type="DisGeNET" id="286380"/>
<dbReference type="GeneCards" id="FOXD4L3"/>
<dbReference type="HGNC" id="HGNC:18523">
    <property type="gene designation" value="FOXD4L3"/>
</dbReference>
<dbReference type="HPA" id="ENSG00000187559">
    <property type="expression patterns" value="Not detected"/>
</dbReference>
<dbReference type="MIM" id="611086">
    <property type="type" value="gene"/>
</dbReference>
<dbReference type="neXtProt" id="NX_Q6VB84"/>
<dbReference type="PharmGKB" id="PA134941846"/>
<dbReference type="VEuPathDB" id="HostDB:ENSG00000187559"/>
<dbReference type="eggNOG" id="KOG2294">
    <property type="taxonomic scope" value="Eukaryota"/>
</dbReference>
<dbReference type="GeneTree" id="ENSGT00940000163353"/>
<dbReference type="HOGENOM" id="CLU_040357_3_1_1"/>
<dbReference type="InParanoid" id="Q6VB84"/>
<dbReference type="OMA" id="RRICPRP"/>
<dbReference type="OrthoDB" id="9537367at2759"/>
<dbReference type="PAN-GO" id="Q6VB84">
    <property type="GO annotations" value="5 GO annotations based on evolutionary models"/>
</dbReference>
<dbReference type="PhylomeDB" id="Q6VB84"/>
<dbReference type="TreeFam" id="TF316127"/>
<dbReference type="PathwayCommons" id="Q6VB84"/>
<dbReference type="SignaLink" id="Q6VB84"/>
<dbReference type="BioGRID-ORCS" id="286380">
    <property type="hits" value="31 hits in 300 CRISPR screens"/>
</dbReference>
<dbReference type="GenomeRNAi" id="286380"/>
<dbReference type="Pharos" id="Q6VB84">
    <property type="development level" value="Tdark"/>
</dbReference>
<dbReference type="PRO" id="PR:Q6VB84"/>
<dbReference type="Proteomes" id="UP000005640">
    <property type="component" value="Chromosome 9"/>
</dbReference>
<dbReference type="RNAct" id="Q6VB84">
    <property type="molecule type" value="protein"/>
</dbReference>
<dbReference type="Bgee" id="ENSG00000187559">
    <property type="expression patterns" value="Expressed in right uterine tube and 29 other cell types or tissues"/>
</dbReference>
<dbReference type="GO" id="GO:0000785">
    <property type="term" value="C:chromatin"/>
    <property type="evidence" value="ECO:0000247"/>
    <property type="project" value="NTNU_SB"/>
</dbReference>
<dbReference type="GO" id="GO:0005634">
    <property type="term" value="C:nucleus"/>
    <property type="evidence" value="ECO:0007669"/>
    <property type="project" value="UniProtKB-SubCell"/>
</dbReference>
<dbReference type="GO" id="GO:0000981">
    <property type="term" value="F:DNA-binding transcription factor activity, RNA polymerase II-specific"/>
    <property type="evidence" value="ECO:0000247"/>
    <property type="project" value="NTNU_SB"/>
</dbReference>
<dbReference type="GO" id="GO:0000978">
    <property type="term" value="F:RNA polymerase II cis-regulatory region sequence-specific DNA binding"/>
    <property type="evidence" value="ECO:0000318"/>
    <property type="project" value="GO_Central"/>
</dbReference>
<dbReference type="GO" id="GO:0009653">
    <property type="term" value="P:anatomical structure morphogenesis"/>
    <property type="evidence" value="ECO:0000318"/>
    <property type="project" value="GO_Central"/>
</dbReference>
<dbReference type="GO" id="GO:0030154">
    <property type="term" value="P:cell differentiation"/>
    <property type="evidence" value="ECO:0000318"/>
    <property type="project" value="GO_Central"/>
</dbReference>
<dbReference type="GO" id="GO:0006357">
    <property type="term" value="P:regulation of transcription by RNA polymerase II"/>
    <property type="evidence" value="ECO:0000318"/>
    <property type="project" value="GO_Central"/>
</dbReference>
<dbReference type="CDD" id="cd20048">
    <property type="entry name" value="FH_FOXD4-like"/>
    <property type="match status" value="1"/>
</dbReference>
<dbReference type="FunFam" id="1.10.10.10:FF:000071">
    <property type="entry name" value="Forkhead box F1"/>
    <property type="match status" value="1"/>
</dbReference>
<dbReference type="Gene3D" id="1.10.10.10">
    <property type="entry name" value="Winged helix-like DNA-binding domain superfamily/Winged helix DNA-binding domain"/>
    <property type="match status" value="1"/>
</dbReference>
<dbReference type="InterPro" id="IPR001766">
    <property type="entry name" value="Fork_head_dom"/>
</dbReference>
<dbReference type="InterPro" id="IPR050211">
    <property type="entry name" value="FOX_domain-containing"/>
</dbReference>
<dbReference type="InterPro" id="IPR018122">
    <property type="entry name" value="TF_fork_head_CS_1"/>
</dbReference>
<dbReference type="InterPro" id="IPR030456">
    <property type="entry name" value="TF_fork_head_CS_2"/>
</dbReference>
<dbReference type="InterPro" id="IPR036388">
    <property type="entry name" value="WH-like_DNA-bd_sf"/>
</dbReference>
<dbReference type="InterPro" id="IPR036390">
    <property type="entry name" value="WH_DNA-bd_sf"/>
</dbReference>
<dbReference type="PANTHER" id="PTHR11829">
    <property type="entry name" value="FORKHEAD BOX PROTEIN"/>
    <property type="match status" value="1"/>
</dbReference>
<dbReference type="PANTHER" id="PTHR11829:SF404">
    <property type="entry name" value="FORKHEAD BOX PROTEIN D4"/>
    <property type="match status" value="1"/>
</dbReference>
<dbReference type="Pfam" id="PF00250">
    <property type="entry name" value="Forkhead"/>
    <property type="match status" value="1"/>
</dbReference>
<dbReference type="PRINTS" id="PR00053">
    <property type="entry name" value="FORKHEAD"/>
</dbReference>
<dbReference type="SMART" id="SM00339">
    <property type="entry name" value="FH"/>
    <property type="match status" value="1"/>
</dbReference>
<dbReference type="SUPFAM" id="SSF46785">
    <property type="entry name" value="Winged helix' DNA-binding domain"/>
    <property type="match status" value="1"/>
</dbReference>
<dbReference type="PROSITE" id="PS00657">
    <property type="entry name" value="FORK_HEAD_1"/>
    <property type="match status" value="1"/>
</dbReference>
<dbReference type="PROSITE" id="PS00658">
    <property type="entry name" value="FORK_HEAD_2"/>
    <property type="match status" value="1"/>
</dbReference>
<dbReference type="PROSITE" id="PS50039">
    <property type="entry name" value="FORK_HEAD_3"/>
    <property type="match status" value="1"/>
</dbReference>
<name>FX4L3_HUMAN</name>
<protein>
    <recommendedName>
        <fullName>Forkhead box protein D4-like 3</fullName>
        <shortName>FOXD4-like 3</shortName>
    </recommendedName>
</protein>
<evidence type="ECO:0000255" key="1">
    <source>
        <dbReference type="PROSITE-ProRule" id="PRU00089"/>
    </source>
</evidence>
<evidence type="ECO:0000256" key="2">
    <source>
        <dbReference type="SAM" id="MobiDB-lite"/>
    </source>
</evidence>
<evidence type="ECO:0000305" key="3"/>
<organism>
    <name type="scientific">Homo sapiens</name>
    <name type="common">Human</name>
    <dbReference type="NCBI Taxonomy" id="9606"/>
    <lineage>
        <taxon>Eukaryota</taxon>
        <taxon>Metazoa</taxon>
        <taxon>Chordata</taxon>
        <taxon>Craniata</taxon>
        <taxon>Vertebrata</taxon>
        <taxon>Euteleostomi</taxon>
        <taxon>Mammalia</taxon>
        <taxon>Eutheria</taxon>
        <taxon>Euarchontoglires</taxon>
        <taxon>Primates</taxon>
        <taxon>Haplorrhini</taxon>
        <taxon>Catarrhini</taxon>
        <taxon>Hominidae</taxon>
        <taxon>Homo</taxon>
    </lineage>
</organism>
<accession>Q6VB84</accession>
<accession>Q5JTX9</accession>
<comment type="interaction">
    <interactant intactId="EBI-11961494">
        <id>Q6VB84</id>
    </interactant>
    <interactant intactId="EBI-1220105">
        <id>P02654</id>
        <label>APOC1</label>
    </interactant>
    <organismsDiffer>false</organismsDiffer>
    <experiments>3</experiments>
</comment>
<comment type="interaction">
    <interactant intactId="EBI-11961494">
        <id>Q6VB84</id>
    </interactant>
    <interactant intactId="EBI-10243741">
        <id>Q5H9J7</id>
        <label>BEX5</label>
    </interactant>
    <organismsDiffer>false</organismsDiffer>
    <experiments>3</experiments>
</comment>
<comment type="interaction">
    <interactant intactId="EBI-11961494">
        <id>Q6VB84</id>
    </interactant>
    <interactant intactId="EBI-739580">
        <id>Q13137</id>
        <label>CALCOCO2</label>
    </interactant>
    <organismsDiffer>false</organismsDiffer>
    <experiments>3</experiments>
</comment>
<comment type="interaction">
    <interactant intactId="EBI-11961494">
        <id>Q6VB84</id>
    </interactant>
    <interactant intactId="EBI-3866279">
        <id>Q9BWT7</id>
        <label>CARD10</label>
    </interactant>
    <organismsDiffer>false</organismsDiffer>
    <experiments>3</experiments>
</comment>
<comment type="interaction">
    <interactant intactId="EBI-11961494">
        <id>Q6VB84</id>
    </interactant>
    <interactant intactId="EBI-7062247">
        <id>Q9UHD4</id>
        <label>CIDEB</label>
    </interactant>
    <organismsDiffer>false</organismsDiffer>
    <experiments>3</experiments>
</comment>
<comment type="interaction">
    <interactant intactId="EBI-11961494">
        <id>Q6VB84</id>
    </interactant>
    <interactant intactId="EBI-3867333">
        <id>A8MQ03</id>
        <label>CYSRT1</label>
    </interactant>
    <organismsDiffer>false</organismsDiffer>
    <experiments>3</experiments>
</comment>
<comment type="interaction">
    <interactant intactId="EBI-11961494">
        <id>Q6VB84</id>
    </interactant>
    <interactant intactId="EBI-7060731">
        <id>P61978-2</id>
        <label>HNRNPK</label>
    </interactant>
    <organismsDiffer>false</organismsDiffer>
    <experiments>3</experiments>
</comment>
<comment type="interaction">
    <interactant intactId="EBI-11961494">
        <id>Q6VB84</id>
    </interactant>
    <interactant intactId="EBI-742808">
        <id>Q5VWX1</id>
        <label>KHDRBS2</label>
    </interactant>
    <organismsDiffer>false</organismsDiffer>
    <experiments>3</experiments>
</comment>
<comment type="interaction">
    <interactant intactId="EBI-11961494">
        <id>Q6VB84</id>
    </interactant>
    <interactant intactId="EBI-11959885">
        <id>Q07627</id>
        <label>KRTAP1-1</label>
    </interactant>
    <organismsDiffer>false</organismsDiffer>
    <experiments>3</experiments>
</comment>
<comment type="interaction">
    <interactant intactId="EBI-11961494">
        <id>Q6VB84</id>
    </interactant>
    <interactant intactId="EBI-10176379">
        <id>P59991</id>
        <label>KRTAP12-2</label>
    </interactant>
    <organismsDiffer>false</organismsDiffer>
    <experiments>3</experiments>
</comment>
<comment type="interaction">
    <interactant intactId="EBI-11961494">
        <id>Q6VB84</id>
    </interactant>
    <interactant intactId="EBI-11962084">
        <id>Q3LI66</id>
        <label>KRTAP6-2</label>
    </interactant>
    <organismsDiffer>false</organismsDiffer>
    <experiments>3</experiments>
</comment>
<comment type="interaction">
    <interactant intactId="EBI-11961494">
        <id>Q6VB84</id>
    </interactant>
    <interactant intactId="EBI-724076">
        <id>Q99750</id>
        <label>MDFI</label>
    </interactant>
    <organismsDiffer>false</organismsDiffer>
    <experiments>3</experiments>
</comment>
<comment type="interaction">
    <interactant intactId="EBI-11961494">
        <id>Q6VB84</id>
    </interactant>
    <interactant intactId="EBI-10172526">
        <id>Q9UJV3-2</id>
        <label>MID2</label>
    </interactant>
    <organismsDiffer>false</organismsDiffer>
    <experiments>3</experiments>
</comment>
<comment type="interaction">
    <interactant intactId="EBI-11961494">
        <id>Q6VB84</id>
    </interactant>
    <interactant intactId="EBI-373552">
        <id>Q96CS7</id>
        <label>PLEKHB2</label>
    </interactant>
    <organismsDiffer>false</organismsDiffer>
    <experiments>3</experiments>
</comment>
<comment type="interaction">
    <interactant intactId="EBI-11961494">
        <id>Q6VB84</id>
    </interactant>
    <interactant intactId="EBI-302345">
        <id>Q8ND90</id>
        <label>PNMA1</label>
    </interactant>
    <organismsDiffer>false</organismsDiffer>
    <experiments>3</experiments>
</comment>
<comment type="interaction">
    <interactant intactId="EBI-11961494">
        <id>Q6VB84</id>
    </interactant>
    <interactant intactId="EBI-11987469">
        <id>Q6ZRY4</id>
        <label>RBPMS2</label>
    </interactant>
    <organismsDiffer>false</organismsDiffer>
    <experiments>3</experiments>
</comment>
<comment type="subcellular location">
    <subcellularLocation>
        <location evidence="1">Nucleus</location>
    </subcellularLocation>
</comment>
<gene>
    <name type="primary">FOXD4L3</name>
</gene>
<sequence>MNLPRAERLRSTPQRSLRDSDGEDGKIDVLGEEEDEDEVEDEEEAASQQFLEQSLQPGLQVARWGGVALPREHIEGGGGPSDPSEFGTKFRAPPRSAAASEDARQPAKPPYSYIALITMAILQNPHKRLTLSGICAFISGRFPYYRRKFPAWQNSIRHNLSLNDCFVKIPREPGHPGKGNYWSLDPASQDMFDNGSFLRRRKRFKRHQLTPGAHLPHPFPLPAAHAALHNPRPGPLLGAPAPPQPVPGAYPNTAPGRRPYALLHPHPLRYLLLSAPVYAGAPKKAEGAALATPAPFPCCSPHLVLSLGRRARVWRRHREADASLSALRVLCKGSGERVQGLRRICPRPRGATATCSSDHQACCIPRPLPLCCKCPPPPLLGQFCSNSSSIRRRTAPTAALPPRARCWAGTCRPRRPC</sequence>
<feature type="chain" id="PRO_0000301980" description="Forkhead box protein D4-like 3">
    <location>
        <begin position="1"/>
        <end position="417"/>
    </location>
</feature>
<feature type="DNA-binding region" description="Fork-head" evidence="1">
    <location>
        <begin position="108"/>
        <end position="202"/>
    </location>
</feature>
<feature type="region of interest" description="Disordered" evidence="2">
    <location>
        <begin position="1"/>
        <end position="50"/>
    </location>
</feature>
<feature type="region of interest" description="Disordered" evidence="2">
    <location>
        <begin position="70"/>
        <end position="105"/>
    </location>
</feature>
<feature type="compositionally biased region" description="Basic and acidic residues" evidence="2">
    <location>
        <begin position="1"/>
        <end position="29"/>
    </location>
</feature>
<feature type="compositionally biased region" description="Acidic residues" evidence="2">
    <location>
        <begin position="30"/>
        <end position="45"/>
    </location>
</feature>
<feature type="sequence conflict" description="In Ref. 1; AAQ76880." evidence="3" ref="1">
    <original>L</original>
    <variation>P</variation>
    <location>
        <position position="9"/>
    </location>
</feature>
<feature type="sequence conflict" description="In Ref. 1; AAQ76880." evidence="3" ref="1">
    <original>S</original>
    <variation>R</variation>
    <location>
        <position position="47"/>
    </location>
</feature>
<feature type="sequence conflict" description="In Ref. 1; AAQ76880." evidence="3" ref="1">
    <original>A</original>
    <variation>D</variation>
    <location>
        <position position="289"/>
    </location>
</feature>
<feature type="sequence conflict" description="In Ref. 1; AAQ76880." evidence="3" ref="1">
    <original>I</original>
    <variation>V</variation>
    <location>
        <position position="344"/>
    </location>
</feature>
<feature type="sequence conflict" description="In Ref. 1; AAQ76880." evidence="3" ref="1">
    <original>R</original>
    <variation>K</variation>
    <location>
        <position position="366"/>
    </location>
</feature>
<feature type="sequence conflict" description="In Ref. 1; AAQ76880." evidence="3" ref="1">
    <original>P</original>
    <variation>R</variation>
    <location>
        <position position="416"/>
    </location>
</feature>